<evidence type="ECO:0000255" key="1">
    <source>
        <dbReference type="HAMAP-Rule" id="MF_02104"/>
    </source>
</evidence>
<accession>A7GMJ4</accession>
<comment type="function">
    <text evidence="1">Is involved in L-lactate degradation and allows cells to grow with lactate as the sole carbon source.</text>
</comment>
<comment type="similarity">
    <text evidence="1">Belongs to the LutC/YkgG family.</text>
</comment>
<dbReference type="EMBL" id="CP000764">
    <property type="protein sequence ID" value="ABS21352.1"/>
    <property type="molecule type" value="Genomic_DNA"/>
</dbReference>
<dbReference type="RefSeq" id="WP_011984105.1">
    <property type="nucleotide sequence ID" value="NC_009674.1"/>
</dbReference>
<dbReference type="SMR" id="A7GMJ4"/>
<dbReference type="STRING" id="315749.Bcer98_1026"/>
<dbReference type="GeneID" id="33896385"/>
<dbReference type="KEGG" id="bcy:Bcer98_1026"/>
<dbReference type="eggNOG" id="COG1556">
    <property type="taxonomic scope" value="Bacteria"/>
</dbReference>
<dbReference type="HOGENOM" id="CLU_090664_1_0_9"/>
<dbReference type="OrthoDB" id="9794157at2"/>
<dbReference type="Proteomes" id="UP000002300">
    <property type="component" value="Chromosome"/>
</dbReference>
<dbReference type="GO" id="GO:0006089">
    <property type="term" value="P:lactate metabolic process"/>
    <property type="evidence" value="ECO:0007669"/>
    <property type="project" value="UniProtKB-UniRule"/>
</dbReference>
<dbReference type="Gene3D" id="3.40.50.10420">
    <property type="entry name" value="NagB/RpiA/CoA transferase-like"/>
    <property type="match status" value="1"/>
</dbReference>
<dbReference type="HAMAP" id="MF_02104">
    <property type="entry name" value="LutC"/>
    <property type="match status" value="1"/>
</dbReference>
<dbReference type="InterPro" id="IPR024185">
    <property type="entry name" value="FTHF_cligase-like_sf"/>
</dbReference>
<dbReference type="InterPro" id="IPR003741">
    <property type="entry name" value="LUD_dom"/>
</dbReference>
<dbReference type="InterPro" id="IPR022823">
    <property type="entry name" value="LutC"/>
</dbReference>
<dbReference type="InterPro" id="IPR037171">
    <property type="entry name" value="NagB/RpiA_transferase-like"/>
</dbReference>
<dbReference type="PANTHER" id="PTHR43682">
    <property type="entry name" value="LACTATE UTILIZATION PROTEIN C"/>
    <property type="match status" value="1"/>
</dbReference>
<dbReference type="PANTHER" id="PTHR43682:SF1">
    <property type="entry name" value="LACTATE UTILIZATION PROTEIN C"/>
    <property type="match status" value="1"/>
</dbReference>
<dbReference type="Pfam" id="PF02589">
    <property type="entry name" value="LUD_dom"/>
    <property type="match status" value="1"/>
</dbReference>
<dbReference type="SUPFAM" id="SSF100950">
    <property type="entry name" value="NagB/RpiA/CoA transferase-like"/>
    <property type="match status" value="1"/>
</dbReference>
<protein>
    <recommendedName>
        <fullName evidence="1">Lactate utilization protein C</fullName>
    </recommendedName>
</protein>
<feature type="chain" id="PRO_0000383999" description="Lactate utilization protein C">
    <location>
        <begin position="1"/>
        <end position="236"/>
    </location>
</feature>
<organism>
    <name type="scientific">Bacillus cytotoxicus (strain DSM 22905 / CIP 110041 / 391-98 / NVH 391-98)</name>
    <dbReference type="NCBI Taxonomy" id="315749"/>
    <lineage>
        <taxon>Bacteria</taxon>
        <taxon>Bacillati</taxon>
        <taxon>Bacillota</taxon>
        <taxon>Bacilli</taxon>
        <taxon>Bacillales</taxon>
        <taxon>Bacillaceae</taxon>
        <taxon>Bacillus</taxon>
        <taxon>Bacillus cereus group</taxon>
    </lineage>
</organism>
<sequence>MAGTIQNRDSFLDNIAKELGRARKTEGVQRPVWKNNVNLETLKDCSEEELLEVFKKQCENIHTTVIETTKDELKDAIQQMIAENGGGPILVSDDERFEKYGLTSFFREELPSQNVEVNIWDPEEKDENIRFAEKANIGIAFSDYTLAESGTIVVQSRKGQGRSLHFLPTVYFSIIPRETIVPRITQAVRDMNARVEKGEAVASCINFITGPSNSADIEMNLVVGVHGPLKAYYFVV</sequence>
<gene>
    <name evidence="1" type="primary">lutC</name>
    <name type="ordered locus">Bcer98_1026</name>
</gene>
<name>LUTC_BACCN</name>
<reference key="1">
    <citation type="journal article" date="2008" name="Chem. Biol. Interact.">
        <title>Extending the Bacillus cereus group genomics to putative food-borne pathogens of different toxicity.</title>
        <authorList>
            <person name="Lapidus A."/>
            <person name="Goltsman E."/>
            <person name="Auger S."/>
            <person name="Galleron N."/>
            <person name="Segurens B."/>
            <person name="Dossat C."/>
            <person name="Land M.L."/>
            <person name="Broussolle V."/>
            <person name="Brillard J."/>
            <person name="Guinebretiere M.-H."/>
            <person name="Sanchis V."/>
            <person name="Nguen-the C."/>
            <person name="Lereclus D."/>
            <person name="Richardson P."/>
            <person name="Wincker P."/>
            <person name="Weissenbach J."/>
            <person name="Ehrlich S.D."/>
            <person name="Sorokin A."/>
        </authorList>
    </citation>
    <scope>NUCLEOTIDE SEQUENCE [LARGE SCALE GENOMIC DNA]</scope>
    <source>
        <strain>DSM 22905 / CIP 110041 / 391-98 / NVH 391-98</strain>
    </source>
</reference>
<proteinExistence type="inferred from homology"/>